<accession>B5XUC1</accession>
<dbReference type="EMBL" id="CP000964">
    <property type="protein sequence ID" value="ACI10727.1"/>
    <property type="molecule type" value="Genomic_DNA"/>
</dbReference>
<dbReference type="KEGG" id="kpe:KPK_0747"/>
<dbReference type="HOGENOM" id="CLU_087840_0_1_6"/>
<dbReference type="Proteomes" id="UP000001734">
    <property type="component" value="Chromosome"/>
</dbReference>
<dbReference type="GO" id="GO:0005886">
    <property type="term" value="C:plasma membrane"/>
    <property type="evidence" value="ECO:0007669"/>
    <property type="project" value="UniProtKB-SubCell"/>
</dbReference>
<dbReference type="GO" id="GO:0061459">
    <property type="term" value="F:L-arginine transmembrane transporter activity"/>
    <property type="evidence" value="ECO:0007669"/>
    <property type="project" value="UniProtKB-UniRule"/>
</dbReference>
<dbReference type="HAMAP" id="MF_01901">
    <property type="entry name" value="ArgO"/>
    <property type="match status" value="1"/>
</dbReference>
<dbReference type="InterPro" id="IPR023445">
    <property type="entry name" value="Arg_export_ArgO_enterobac"/>
</dbReference>
<dbReference type="InterPro" id="IPR001123">
    <property type="entry name" value="LeuE-type"/>
</dbReference>
<dbReference type="InterPro" id="IPR004777">
    <property type="entry name" value="Lys/arg_exporter"/>
</dbReference>
<dbReference type="NCBIfam" id="TIGR00948">
    <property type="entry name" value="2a75"/>
    <property type="match status" value="1"/>
</dbReference>
<dbReference type="NCBIfam" id="NF006801">
    <property type="entry name" value="PRK09304.1"/>
    <property type="match status" value="1"/>
</dbReference>
<dbReference type="PANTHER" id="PTHR30086">
    <property type="entry name" value="ARGININE EXPORTER PROTEIN ARGO"/>
    <property type="match status" value="1"/>
</dbReference>
<dbReference type="PANTHER" id="PTHR30086:SF20">
    <property type="entry name" value="ARGININE EXPORTER PROTEIN ARGO-RELATED"/>
    <property type="match status" value="1"/>
</dbReference>
<dbReference type="Pfam" id="PF01810">
    <property type="entry name" value="LysE"/>
    <property type="match status" value="1"/>
</dbReference>
<sequence>MFTYYFQGLALGAAMILPLGPQNAFVMNQGIRRQYHLMIALLCAVSDLLLICAGIFGGSALLMQSPWLLAIVTWGGVAFLLWYGFGALKTAFSQNLELASAEVMQQGRWKIIITMLAVTWLNPHVYLDTFVVLGSLGGQLAVEPKRWFALGTISASFLWFFGLALLAAWLAPRLRTAKAQRIINIVVGAVMWFIAFQLAKEGVGHILALLN</sequence>
<organism>
    <name type="scientific">Klebsiella pneumoniae (strain 342)</name>
    <dbReference type="NCBI Taxonomy" id="507522"/>
    <lineage>
        <taxon>Bacteria</taxon>
        <taxon>Pseudomonadati</taxon>
        <taxon>Pseudomonadota</taxon>
        <taxon>Gammaproteobacteria</taxon>
        <taxon>Enterobacterales</taxon>
        <taxon>Enterobacteriaceae</taxon>
        <taxon>Klebsiella/Raoultella group</taxon>
        <taxon>Klebsiella</taxon>
        <taxon>Klebsiella pneumoniae complex</taxon>
    </lineage>
</organism>
<gene>
    <name evidence="1" type="primary">argO</name>
    <name type="ordered locus">KPK_0747</name>
</gene>
<evidence type="ECO:0000255" key="1">
    <source>
        <dbReference type="HAMAP-Rule" id="MF_01901"/>
    </source>
</evidence>
<reference key="1">
    <citation type="journal article" date="2008" name="PLoS Genet.">
        <title>Complete genome sequence of the N2-fixing broad host range endophyte Klebsiella pneumoniae 342 and virulence predictions verified in mice.</title>
        <authorList>
            <person name="Fouts D.E."/>
            <person name="Tyler H.L."/>
            <person name="DeBoy R.T."/>
            <person name="Daugherty S."/>
            <person name="Ren Q."/>
            <person name="Badger J.H."/>
            <person name="Durkin A.S."/>
            <person name="Huot H."/>
            <person name="Shrivastava S."/>
            <person name="Kothari S."/>
            <person name="Dodson R.J."/>
            <person name="Mohamoud Y."/>
            <person name="Khouri H."/>
            <person name="Roesch L.F.W."/>
            <person name="Krogfelt K.A."/>
            <person name="Struve C."/>
            <person name="Triplett E.W."/>
            <person name="Methe B.A."/>
        </authorList>
    </citation>
    <scope>NUCLEOTIDE SEQUENCE [LARGE SCALE GENOMIC DNA]</scope>
    <source>
        <strain>342</strain>
    </source>
</reference>
<name>ARGO_KLEP3</name>
<protein>
    <recommendedName>
        <fullName evidence="1">Arginine exporter protein ArgO</fullName>
    </recommendedName>
</protein>
<feature type="chain" id="PRO_1000188717" description="Arginine exporter protein ArgO">
    <location>
        <begin position="1"/>
        <end position="211"/>
    </location>
</feature>
<feature type="transmembrane region" description="Helical" evidence="1">
    <location>
        <begin position="1"/>
        <end position="21"/>
    </location>
</feature>
<feature type="transmembrane region" description="Helical" evidence="1">
    <location>
        <begin position="37"/>
        <end position="57"/>
    </location>
</feature>
<feature type="transmembrane region" description="Helical" evidence="1">
    <location>
        <begin position="68"/>
        <end position="88"/>
    </location>
</feature>
<feature type="transmembrane region" description="Helical" evidence="1">
    <location>
        <begin position="111"/>
        <end position="131"/>
    </location>
</feature>
<feature type="transmembrane region" description="Helical" evidence="1">
    <location>
        <begin position="147"/>
        <end position="167"/>
    </location>
</feature>
<feature type="transmembrane region" description="Helical" evidence="1">
    <location>
        <begin position="182"/>
        <end position="202"/>
    </location>
</feature>
<keyword id="KW-0029">Amino-acid transport</keyword>
<keyword id="KW-0997">Cell inner membrane</keyword>
<keyword id="KW-1003">Cell membrane</keyword>
<keyword id="KW-0472">Membrane</keyword>
<keyword id="KW-0812">Transmembrane</keyword>
<keyword id="KW-1133">Transmembrane helix</keyword>
<keyword id="KW-0813">Transport</keyword>
<proteinExistence type="inferred from homology"/>
<comment type="function">
    <text evidence="1">Involved in the export of arginine. Important to control the intracellular level of arginine and the correct balance between arginine and lysine.</text>
</comment>
<comment type="catalytic activity">
    <reaction evidence="1">
        <text>L-arginine(in) = L-arginine(out)</text>
        <dbReference type="Rhea" id="RHEA:32143"/>
        <dbReference type="ChEBI" id="CHEBI:32682"/>
    </reaction>
    <physiologicalReaction direction="left-to-right" evidence="1">
        <dbReference type="Rhea" id="RHEA:32144"/>
    </physiologicalReaction>
</comment>
<comment type="subcellular location">
    <subcellularLocation>
        <location evidence="1">Cell inner membrane</location>
        <topology evidence="1">Multi-pass membrane protein</topology>
    </subcellularLocation>
</comment>
<comment type="similarity">
    <text evidence="1">Belongs to the LysE/ArgO transporter (TC 2.A.75) family.</text>
</comment>